<organism>
    <name type="scientific">Drosophila melanogaster</name>
    <name type="common">Fruit fly</name>
    <dbReference type="NCBI Taxonomy" id="7227"/>
    <lineage>
        <taxon>Eukaryota</taxon>
        <taxon>Metazoa</taxon>
        <taxon>Ecdysozoa</taxon>
        <taxon>Arthropoda</taxon>
        <taxon>Hexapoda</taxon>
        <taxon>Insecta</taxon>
        <taxon>Pterygota</taxon>
        <taxon>Neoptera</taxon>
        <taxon>Endopterygota</taxon>
        <taxon>Diptera</taxon>
        <taxon>Brachycera</taxon>
        <taxon>Muscomorpha</taxon>
        <taxon>Ephydroidea</taxon>
        <taxon>Drosophilidae</taxon>
        <taxon>Drosophila</taxon>
        <taxon>Sophophora</taxon>
    </lineage>
</organism>
<gene>
    <name type="primary">rno</name>
    <name type="ORF">CG7036</name>
</gene>
<proteinExistence type="evidence at protein level"/>
<name>RNO_DROME</name>
<reference key="1">
    <citation type="journal article" date="2003" name="Genetics">
        <title>The novel plant homeodomain protein rhinoceros antagonizes Ras signaling in the Drosophila eye.</title>
        <authorList>
            <person name="Voas M.G."/>
            <person name="Rebay I."/>
        </authorList>
    </citation>
    <scope>NUCLEOTIDE SEQUENCE [MRNA]</scope>
    <scope>SUBCELLULAR LOCATION</scope>
    <scope>FUNCTION</scope>
</reference>
<reference key="2">
    <citation type="journal article" date="2000" name="Science">
        <title>The genome sequence of Drosophila melanogaster.</title>
        <authorList>
            <person name="Adams M.D."/>
            <person name="Celniker S.E."/>
            <person name="Holt R.A."/>
            <person name="Evans C.A."/>
            <person name="Gocayne J.D."/>
            <person name="Amanatides P.G."/>
            <person name="Scherer S.E."/>
            <person name="Li P.W."/>
            <person name="Hoskins R.A."/>
            <person name="Galle R.F."/>
            <person name="George R.A."/>
            <person name="Lewis S.E."/>
            <person name="Richards S."/>
            <person name="Ashburner M."/>
            <person name="Henderson S.N."/>
            <person name="Sutton G.G."/>
            <person name="Wortman J.R."/>
            <person name="Yandell M.D."/>
            <person name="Zhang Q."/>
            <person name="Chen L.X."/>
            <person name="Brandon R.C."/>
            <person name="Rogers Y.-H.C."/>
            <person name="Blazej R.G."/>
            <person name="Champe M."/>
            <person name="Pfeiffer B.D."/>
            <person name="Wan K.H."/>
            <person name="Doyle C."/>
            <person name="Baxter E.G."/>
            <person name="Helt G."/>
            <person name="Nelson C.R."/>
            <person name="Miklos G.L.G."/>
            <person name="Abril J.F."/>
            <person name="Agbayani A."/>
            <person name="An H.-J."/>
            <person name="Andrews-Pfannkoch C."/>
            <person name="Baldwin D."/>
            <person name="Ballew R.M."/>
            <person name="Basu A."/>
            <person name="Baxendale J."/>
            <person name="Bayraktaroglu L."/>
            <person name="Beasley E.M."/>
            <person name="Beeson K.Y."/>
            <person name="Benos P.V."/>
            <person name="Berman B.P."/>
            <person name="Bhandari D."/>
            <person name="Bolshakov S."/>
            <person name="Borkova D."/>
            <person name="Botchan M.R."/>
            <person name="Bouck J."/>
            <person name="Brokstein P."/>
            <person name="Brottier P."/>
            <person name="Burtis K.C."/>
            <person name="Busam D.A."/>
            <person name="Butler H."/>
            <person name="Cadieu E."/>
            <person name="Center A."/>
            <person name="Chandra I."/>
            <person name="Cherry J.M."/>
            <person name="Cawley S."/>
            <person name="Dahlke C."/>
            <person name="Davenport L.B."/>
            <person name="Davies P."/>
            <person name="de Pablos B."/>
            <person name="Delcher A."/>
            <person name="Deng Z."/>
            <person name="Mays A.D."/>
            <person name="Dew I."/>
            <person name="Dietz S.M."/>
            <person name="Dodson K."/>
            <person name="Doup L.E."/>
            <person name="Downes M."/>
            <person name="Dugan-Rocha S."/>
            <person name="Dunkov B.C."/>
            <person name="Dunn P."/>
            <person name="Durbin K.J."/>
            <person name="Evangelista C.C."/>
            <person name="Ferraz C."/>
            <person name="Ferriera S."/>
            <person name="Fleischmann W."/>
            <person name="Fosler C."/>
            <person name="Gabrielian A.E."/>
            <person name="Garg N.S."/>
            <person name="Gelbart W.M."/>
            <person name="Glasser K."/>
            <person name="Glodek A."/>
            <person name="Gong F."/>
            <person name="Gorrell J.H."/>
            <person name="Gu Z."/>
            <person name="Guan P."/>
            <person name="Harris M."/>
            <person name="Harris N.L."/>
            <person name="Harvey D.A."/>
            <person name="Heiman T.J."/>
            <person name="Hernandez J.R."/>
            <person name="Houck J."/>
            <person name="Hostin D."/>
            <person name="Houston K.A."/>
            <person name="Howland T.J."/>
            <person name="Wei M.-H."/>
            <person name="Ibegwam C."/>
            <person name="Jalali M."/>
            <person name="Kalush F."/>
            <person name="Karpen G.H."/>
            <person name="Ke Z."/>
            <person name="Kennison J.A."/>
            <person name="Ketchum K.A."/>
            <person name="Kimmel B.E."/>
            <person name="Kodira C.D."/>
            <person name="Kraft C.L."/>
            <person name="Kravitz S."/>
            <person name="Kulp D."/>
            <person name="Lai Z."/>
            <person name="Lasko P."/>
            <person name="Lei Y."/>
            <person name="Levitsky A.A."/>
            <person name="Li J.H."/>
            <person name="Li Z."/>
            <person name="Liang Y."/>
            <person name="Lin X."/>
            <person name="Liu X."/>
            <person name="Mattei B."/>
            <person name="McIntosh T.C."/>
            <person name="McLeod M.P."/>
            <person name="McPherson D."/>
            <person name="Merkulov G."/>
            <person name="Milshina N.V."/>
            <person name="Mobarry C."/>
            <person name="Morris J."/>
            <person name="Moshrefi A."/>
            <person name="Mount S.M."/>
            <person name="Moy M."/>
            <person name="Murphy B."/>
            <person name="Murphy L."/>
            <person name="Muzny D.M."/>
            <person name="Nelson D.L."/>
            <person name="Nelson D.R."/>
            <person name="Nelson K.A."/>
            <person name="Nixon K."/>
            <person name="Nusskern D.R."/>
            <person name="Pacleb J.M."/>
            <person name="Palazzolo M."/>
            <person name="Pittman G.S."/>
            <person name="Pan S."/>
            <person name="Pollard J."/>
            <person name="Puri V."/>
            <person name="Reese M.G."/>
            <person name="Reinert K."/>
            <person name="Remington K."/>
            <person name="Saunders R.D.C."/>
            <person name="Scheeler F."/>
            <person name="Shen H."/>
            <person name="Shue B.C."/>
            <person name="Siden-Kiamos I."/>
            <person name="Simpson M."/>
            <person name="Skupski M.P."/>
            <person name="Smith T.J."/>
            <person name="Spier E."/>
            <person name="Spradling A.C."/>
            <person name="Stapleton M."/>
            <person name="Strong R."/>
            <person name="Sun E."/>
            <person name="Svirskas R."/>
            <person name="Tector C."/>
            <person name="Turner R."/>
            <person name="Venter E."/>
            <person name="Wang A.H."/>
            <person name="Wang X."/>
            <person name="Wang Z.-Y."/>
            <person name="Wassarman D.A."/>
            <person name="Weinstock G.M."/>
            <person name="Weissenbach J."/>
            <person name="Williams S.M."/>
            <person name="Woodage T."/>
            <person name="Worley K.C."/>
            <person name="Wu D."/>
            <person name="Yang S."/>
            <person name="Yao Q.A."/>
            <person name="Ye J."/>
            <person name="Yeh R.-F."/>
            <person name="Zaveri J.S."/>
            <person name="Zhan M."/>
            <person name="Zhang G."/>
            <person name="Zhao Q."/>
            <person name="Zheng L."/>
            <person name="Zheng X.H."/>
            <person name="Zhong F.N."/>
            <person name="Zhong W."/>
            <person name="Zhou X."/>
            <person name="Zhu S.C."/>
            <person name="Zhu X."/>
            <person name="Smith H.O."/>
            <person name="Gibbs R.A."/>
            <person name="Myers E.W."/>
            <person name="Rubin G.M."/>
            <person name="Venter J.C."/>
        </authorList>
    </citation>
    <scope>NUCLEOTIDE SEQUENCE [LARGE SCALE GENOMIC DNA]</scope>
    <source>
        <strain>Berkeley</strain>
    </source>
</reference>
<reference key="3">
    <citation type="journal article" date="2002" name="Genome Biol.">
        <title>Annotation of the Drosophila melanogaster euchromatic genome: a systematic review.</title>
        <authorList>
            <person name="Misra S."/>
            <person name="Crosby M.A."/>
            <person name="Mungall C.J."/>
            <person name="Matthews B.B."/>
            <person name="Campbell K.S."/>
            <person name="Hradecky P."/>
            <person name="Huang Y."/>
            <person name="Kaminker J.S."/>
            <person name="Millburn G.H."/>
            <person name="Prochnik S.E."/>
            <person name="Smith C.D."/>
            <person name="Tupy J.L."/>
            <person name="Whitfield E.J."/>
            <person name="Bayraktaroglu L."/>
            <person name="Berman B.P."/>
            <person name="Bettencourt B.R."/>
            <person name="Celniker S.E."/>
            <person name="de Grey A.D.N.J."/>
            <person name="Drysdale R.A."/>
            <person name="Harris N.L."/>
            <person name="Richter J."/>
            <person name="Russo S."/>
            <person name="Schroeder A.J."/>
            <person name="Shu S.Q."/>
            <person name="Stapleton M."/>
            <person name="Yamada C."/>
            <person name="Ashburner M."/>
            <person name="Gelbart W.M."/>
            <person name="Rubin G.M."/>
            <person name="Lewis S.E."/>
        </authorList>
    </citation>
    <scope>GENOME REANNOTATION</scope>
    <source>
        <strain>Berkeley</strain>
    </source>
</reference>
<reference key="4">
    <citation type="journal article" date="2008" name="J. Proteome Res.">
        <title>Phosphoproteome analysis of Drosophila melanogaster embryos.</title>
        <authorList>
            <person name="Zhai B."/>
            <person name="Villen J."/>
            <person name="Beausoleil S.A."/>
            <person name="Mintseris J."/>
            <person name="Gygi S.P."/>
        </authorList>
    </citation>
    <scope>PHOSPHORYLATION [LARGE SCALE ANALYSIS] AT THR-1346; SER-1352; THR-1364; THR-1456; SER-2880; SER-2881; SER-3104 AND SER-3110</scope>
    <scope>IDENTIFICATION BY MASS SPECTROMETRY</scope>
    <source>
        <tissue>Embryo</tissue>
    </source>
</reference>
<protein>
    <recommendedName>
        <fullName>PHD finger protein rhinoceros</fullName>
    </recommendedName>
</protein>
<sequence>MSQRGKRGNQQHHQSHHPPPQQHQRKDVEPQPPPTKRRKGRPPNGATTAAVAEVTGSGPATGSERVPVLPLCKSKHEEPGAEAGGGGQGRAAAGATSTSKSKSTKLAKSASKCKSQGASSSSSWQARSVADIKMSSIYNRSSTEAPAELYRKDLISAMKLPDSEPLANYEYLIVTDPWKQEWEKGVQVPVNPDSLPEPCVYVLPEPVVSPAHDFKLPKNRYLRITKDEHYSPDLHYLTNVVALAENTCAYDIDPIDEAWLRLYNSDRAQCGAFPINATQFERVIEELEVRCWEQIQVILKLEEGLGIEFDENVICDVCRSPDSEEANEMVFCDNCNICVHQACYGITAIPSGQWLCRTCSMGIKPDCVLCPNKGGAMKSNKSGKHWAHVSCALWIPEVSIGCVDRMEPITKISSIPQSRWSLICVLCRKRVGSCIQCSVKPCKTAYHVTCAFQHGLEMRAIIEEGNAEDGVKLRSYCQKHSMSKGKKENAGSHGGGSASVASAMQKANRYGSGAGGGADDGNNACGTTGEDPRRRKNHRKTELTSEERNQARAQRLQEVEAEFDKHVNFNDISCHLFDVDDDAIVAIYNYWKLKRKSRHNRELIPPKSEDVEMIARKQEQQDMENHKLVVHLRQDLERVRNLCYMVSRREKLSRSLFKLREQVFYKQLGVLDEMRLEKQQTKQEQQQPVMDLNAVIYANDGPTLYDRFYSSVGGQTVPAQYQDLKYILEQLMGKLQSGKQGRGRASQSPNKRKQPAKASPNKKLNNGILSSRTSSPEKTVAGSKVGTTTSKVRSPPGKNPTGRRASKSSAAAATSTHNKSQFHSNIRSSTTSHSSSGTISSGNSSSANGTSSSDSSSGSDSGSESGSSSAGSGVSKRKSSSGSPLKKQSYARSVEQRQKQRQRRQNEAVAGASATYPDSRSASSSSDGEDERCRNRQEPERGARRGPIQSKSVPNRSQASRSKPTTEADVGEGTGASARRKLSTTTRGLAQMDKDADESVSSDESEELLPLRGERQRESTTTSGLATTGSAIGRNLGQHIYSDSESSSSEQEKDQEEQATVESNVSDSQNQQTIRTKAAMKEFVPGTAATTSSTSQAASSTSKAKNTREGKEGAASIGNSTKTKPNPNAKLYPADLLVVPQRQAAKKASENMRSTNLATTLQPDVSDRVREPDINSISGTAKSKVKDSSSRVSNEADKSSLEKVRPKEHLQKTVGKTSESAPAERGKRGRPPKVPKDARPPSITENDKPALPTHTQSKPPSVVATPVSAKSNFAVSLVPQRQAAKKAAEQLKSSKPVLESFSTGNDISDKETVTSATISGSGSSVPAASTPVKPTRRSSIKEAPITPKEPLSGRRKSKEDLLATPIKTTPLVKRRVVVPNLSSSSSGDSESSSSSSSSGSSSSSGGSDSDSESQASNSENPSSREPPVAPAKVPSDSSLVPKRSPRKSMDKPSALTIAPASVNVLNIPSTRSRQNSTTKSTKVALQKAVQSVEDDVKCTPKTNRLQGSMDECGKQVQLEQATKRATRGSKSRPPSPTAKSSPEKTVSRCKSRAEESPKKVANLEQEISQRKVASGKGTSSLDKLLNKKQQQMNHSAQATPPPISPTPPASETRIVKDQCDLKPDEVSIQQINLGADAQPEPDLDPESAAEAGELPMDIDEELTTAPTRTQLSASASKLADIIDDERPPAAPLPASPTPTPTSNDEMSDAGSDLSERRRMRWRSRRRRRRRSHEPDEEHTHHTQHLLNEMEMARELEEERKNELLANASKYSASTSSPAVTVIPPDPPEIIELDSNSAEQQQQHLHDQPLPPPLVVQSPAADVVPTVMQQQLLPSQRPLIEQLPVEHLPIVETILEMEDSKFANNFASNLASVLNPPNQMSLIGSSIDRSKQISEEDSIQATRNLLEKLRKTKRKAQDDCSSKEAVDLLPPTPAIPSVFPFHNAADPEDIIHAQKEQQHQQQQQLQSSQTCIYGNSSGPNSVASLTIKDSPMTANSGSYANSLTNTPNATPTNATMNNLGYQVNFPNSQPPPTLGLFLEKSPHQKGACPLSSNGGANVGQPAPTPDFVDLAAAAVKNTLGSFRGAATVPTQSGTGVNAKINDYDESTRMQSPFGGMPWNESDLIAERRSSSPSSVSESNDPPQPPPVVTATATTARSLAQLESCKNFFNSYPSGNAGPGTAANATAPFNHPPMVNGIDSIPMFNNTNTTQHQPTTPAHQQQQQRTPNNQYNGTIYPQLAGIMHPQTTPTEPPSSLYGNGGVGGAVQSTTLPPPAQVNQYPGTPYSATTLGMISVQQPALSTVPVQTATTPNNPFTLTSPIDGKMPTYPAQLLSSCAEAVVASMMPPTPPVTATAKDSPSKRTSVSGSNLSKKQTHKSPQLPQGKSPGKSPRQPLQPPTPPAPVPVVALPPTKYDPQTHTLQGKPRQRAPRGSGGSGAPGRGRGRGRGRGRGGGVTSGMAMVLPPPMSDYGSNTHIVNNLVGTPFEFNNEFDDMAGPGVENLQSLRDRRRSFELRAPRVQNKPTTTPTTATTTNPLLHPVLPGPVDMRTYNLGFEAPHSTASQEAYQNNLLGAFDSGTADQTLSEFNEEDERQFQSALRATGTGTSPSKQHSGPTALVAPPTGPNPTPAPNLLLHCTEANQMAPNVAATGAATHLVEGSLVEASLEATSEEVSIDSDSTIPHSKTSTSDARSQIKLKIKSPMAYPEHYNAMTNSSSLTLTSTLVQSSNVVQTTVSTSTVVSASSAVSGNSRRMRKKELLSLYVVQKDNHNDDSSCGLPAASDTLPLENLRKSEEEDELSGGNGTKRFKKNSSSRELRALDANLALVEEQLLSSGAGACGGGSSGDGRRRSACSSGSNNDNNGKTGAASSAGKRRGRSKTLESSEDDHQAPKLKIKIRGLTANETPSGVSSVDEGQNYSYEMTRRACPPKKRLTSNFSTLTLEEIKRDSMNYRKKVMQDFVKGEDSNKRGVVVKDGESLIMPQPPTKRPKSSKPKKEKKEKKRQKQQQLILSSSTTTMTTTLIENTASASPGDKPKLILRFGKRKAETTTRTASLEQPPTLEAPAPLRFKIARNSSGGGYIIGTKAEKKDESTADNTSPITELPLISPLREASPQGRLLNSFTPHSQNANTSPALLGKDTGTPSPPCLVIDSSKSADVHDSTSLPESGEAAMGVQSSLVNATTPLCVNVGNYENSNNSLPSASGTGSASSNSCNSNSINNNGSGGGRASGEGGLLPLKKDCEVR</sequence>
<feature type="chain" id="PRO_0000253537" description="PHD finger protein rhinoceros">
    <location>
        <begin position="1"/>
        <end position="3241"/>
    </location>
</feature>
<feature type="zinc finger region" description="PHD-type 1" evidence="2">
    <location>
        <begin position="312"/>
        <end position="362"/>
    </location>
</feature>
<feature type="zinc finger region" description="C2HC pre-PHD-type" evidence="3">
    <location>
        <begin position="364"/>
        <end position="398"/>
    </location>
</feature>
<feature type="zinc finger region" description="PHD-type 2" evidence="3">
    <location>
        <begin position="422"/>
        <end position="481"/>
    </location>
</feature>
<feature type="region of interest" description="Disordered" evidence="4">
    <location>
        <begin position="1"/>
        <end position="126"/>
    </location>
</feature>
<feature type="region of interest" description="Disordered" evidence="4">
    <location>
        <begin position="482"/>
        <end position="501"/>
    </location>
</feature>
<feature type="region of interest" description="Disordered" evidence="4">
    <location>
        <begin position="508"/>
        <end position="554"/>
    </location>
</feature>
<feature type="region of interest" description="Disordered" evidence="4">
    <location>
        <begin position="737"/>
        <end position="1266"/>
    </location>
</feature>
<feature type="region of interest" description="Disordered" evidence="4">
    <location>
        <begin position="1279"/>
        <end position="1483"/>
    </location>
</feature>
<feature type="region of interest" description="Disordered" evidence="4">
    <location>
        <begin position="1500"/>
        <end position="1613"/>
    </location>
</feature>
<feature type="region of interest" description="Disordered" evidence="4">
    <location>
        <begin position="1632"/>
        <end position="1746"/>
    </location>
</feature>
<feature type="region of interest" description="Disordered" evidence="4">
    <location>
        <begin position="2037"/>
        <end position="2061"/>
    </location>
</feature>
<feature type="region of interest" description="Disordered" evidence="4">
    <location>
        <begin position="2124"/>
        <end position="2148"/>
    </location>
</feature>
<feature type="region of interest" description="Disordered" evidence="4">
    <location>
        <begin position="2203"/>
        <end position="2227"/>
    </location>
</feature>
<feature type="region of interest" description="Disordered" evidence="4">
    <location>
        <begin position="2346"/>
        <end position="2454"/>
    </location>
</feature>
<feature type="region of interest" description="Disordered" evidence="4">
    <location>
        <begin position="2598"/>
        <end position="2629"/>
    </location>
</feature>
<feature type="region of interest" description="Disordered" evidence="4">
    <location>
        <begin position="2667"/>
        <end position="2691"/>
    </location>
</feature>
<feature type="region of interest" description="Disordered" evidence="4">
    <location>
        <begin position="2768"/>
        <end position="2811"/>
    </location>
</feature>
<feature type="region of interest" description="Disordered" evidence="4">
    <location>
        <begin position="2832"/>
        <end position="2911"/>
    </location>
</feature>
<feature type="region of interest" description="Disordered" evidence="4">
    <location>
        <begin position="2964"/>
        <end position="3015"/>
    </location>
</feature>
<feature type="region of interest" description="Disordered" evidence="4">
    <location>
        <begin position="3042"/>
        <end position="3169"/>
    </location>
</feature>
<feature type="region of interest" description="Disordered" evidence="4">
    <location>
        <begin position="3184"/>
        <end position="3241"/>
    </location>
</feature>
<feature type="coiled-coil region" evidence="1">
    <location>
        <begin position="1741"/>
        <end position="1770"/>
    </location>
</feature>
<feature type="coiled-coil region" evidence="1">
    <location>
        <begin position="1893"/>
        <end position="1925"/>
    </location>
</feature>
<feature type="compositionally biased region" description="Basic residues" evidence="4">
    <location>
        <begin position="1"/>
        <end position="16"/>
    </location>
</feature>
<feature type="compositionally biased region" description="Low complexity" evidence="4">
    <location>
        <begin position="42"/>
        <end position="55"/>
    </location>
</feature>
<feature type="compositionally biased region" description="Low complexity" evidence="4">
    <location>
        <begin position="90"/>
        <end position="126"/>
    </location>
</feature>
<feature type="compositionally biased region" description="Basic and acidic residues" evidence="4">
    <location>
        <begin position="540"/>
        <end position="554"/>
    </location>
</feature>
<feature type="compositionally biased region" description="Polar residues" evidence="4">
    <location>
        <begin position="762"/>
        <end position="777"/>
    </location>
</feature>
<feature type="compositionally biased region" description="Low complexity" evidence="4">
    <location>
        <begin position="807"/>
        <end position="874"/>
    </location>
</feature>
<feature type="compositionally biased region" description="Basic and acidic residues" evidence="4">
    <location>
        <begin position="931"/>
        <end position="943"/>
    </location>
</feature>
<feature type="compositionally biased region" description="Polar residues" evidence="4">
    <location>
        <begin position="949"/>
        <end position="965"/>
    </location>
</feature>
<feature type="compositionally biased region" description="Acidic residues" evidence="4">
    <location>
        <begin position="995"/>
        <end position="1007"/>
    </location>
</feature>
<feature type="compositionally biased region" description="Low complexity" evidence="4">
    <location>
        <begin position="1019"/>
        <end position="1031"/>
    </location>
</feature>
<feature type="compositionally biased region" description="Polar residues" evidence="4">
    <location>
        <begin position="1060"/>
        <end position="1075"/>
    </location>
</feature>
<feature type="compositionally biased region" description="Low complexity" evidence="4">
    <location>
        <begin position="1087"/>
        <end position="1104"/>
    </location>
</feature>
<feature type="compositionally biased region" description="Polar residues" evidence="4">
    <location>
        <begin position="1117"/>
        <end position="1126"/>
    </location>
</feature>
<feature type="compositionally biased region" description="Polar residues" evidence="4">
    <location>
        <begin position="1151"/>
        <end position="1163"/>
    </location>
</feature>
<feature type="compositionally biased region" description="Basic and acidic residues" evidence="4">
    <location>
        <begin position="1184"/>
        <end position="1211"/>
    </location>
</feature>
<feature type="compositionally biased region" description="Polar residues" evidence="4">
    <location>
        <begin position="1313"/>
        <end position="1327"/>
    </location>
</feature>
<feature type="compositionally biased region" description="Low complexity" evidence="4">
    <location>
        <begin position="1382"/>
        <end position="1426"/>
    </location>
</feature>
<feature type="compositionally biased region" description="Polar residues" evidence="4">
    <location>
        <begin position="1463"/>
        <end position="1483"/>
    </location>
</feature>
<feature type="compositionally biased region" description="Basic and acidic residues" evidence="4">
    <location>
        <begin position="1541"/>
        <end position="1558"/>
    </location>
</feature>
<feature type="compositionally biased region" description="Polar residues" evidence="4">
    <location>
        <begin position="1576"/>
        <end position="1594"/>
    </location>
</feature>
<feature type="compositionally biased region" description="Pro residues" evidence="4">
    <location>
        <begin position="1599"/>
        <end position="1608"/>
    </location>
</feature>
<feature type="compositionally biased region" description="Polar residues" evidence="4">
    <location>
        <begin position="1664"/>
        <end position="1675"/>
    </location>
</feature>
<feature type="compositionally biased region" description="Pro residues" evidence="4">
    <location>
        <begin position="1688"/>
        <end position="1699"/>
    </location>
</feature>
<feature type="compositionally biased region" description="Basic residues" evidence="4">
    <location>
        <begin position="1717"/>
        <end position="1731"/>
    </location>
</feature>
<feature type="compositionally biased region" description="Polar residues" evidence="4">
    <location>
        <begin position="2359"/>
        <end position="2381"/>
    </location>
</feature>
<feature type="compositionally biased region" description="Pro residues" evidence="4">
    <location>
        <begin position="2392"/>
        <end position="2402"/>
    </location>
</feature>
<feature type="compositionally biased region" description="Gly residues" evidence="4">
    <location>
        <begin position="2430"/>
        <end position="2439"/>
    </location>
</feature>
<feature type="compositionally biased region" description="Polar residues" evidence="4">
    <location>
        <begin position="2598"/>
        <end position="2611"/>
    </location>
</feature>
<feature type="compositionally biased region" description="Polar residues" evidence="4">
    <location>
        <begin position="2673"/>
        <end position="2689"/>
    </location>
</feature>
<feature type="compositionally biased region" description="Polar residues" evidence="4">
    <location>
        <begin position="2855"/>
        <end position="2865"/>
    </location>
</feature>
<feature type="compositionally biased region" description="Basic and acidic residues" evidence="4">
    <location>
        <begin position="2876"/>
        <end position="2887"/>
    </location>
</feature>
<feature type="compositionally biased region" description="Polar residues" evidence="4">
    <location>
        <begin position="2899"/>
        <end position="2911"/>
    </location>
</feature>
<feature type="compositionally biased region" description="Basic and acidic residues" evidence="4">
    <location>
        <begin position="2964"/>
        <end position="2974"/>
    </location>
</feature>
<feature type="compositionally biased region" description="Basic residues" evidence="4">
    <location>
        <begin position="2984"/>
        <end position="3002"/>
    </location>
</feature>
<feature type="compositionally biased region" description="Low complexity" evidence="4">
    <location>
        <begin position="3003"/>
        <end position="3015"/>
    </location>
</feature>
<feature type="compositionally biased region" description="Polar residues" evidence="4">
    <location>
        <begin position="3115"/>
        <end position="3130"/>
    </location>
</feature>
<feature type="compositionally biased region" description="Polar residues" evidence="4">
    <location>
        <begin position="3184"/>
        <end position="3197"/>
    </location>
</feature>
<feature type="compositionally biased region" description="Low complexity" evidence="4">
    <location>
        <begin position="3198"/>
        <end position="3218"/>
    </location>
</feature>
<feature type="compositionally biased region" description="Gly residues" evidence="4">
    <location>
        <begin position="3219"/>
        <end position="3230"/>
    </location>
</feature>
<feature type="modified residue" description="Phosphothreonine" evidence="6">
    <location>
        <position position="1346"/>
    </location>
</feature>
<feature type="modified residue" description="Phosphoserine" evidence="6">
    <location>
        <position position="1352"/>
    </location>
</feature>
<feature type="modified residue" description="Phosphothreonine" evidence="6">
    <location>
        <position position="1364"/>
    </location>
</feature>
<feature type="modified residue" description="Phosphothreonine" evidence="6">
    <location>
        <position position="1456"/>
    </location>
</feature>
<feature type="modified residue" description="Phosphoserine" evidence="6">
    <location>
        <position position="2880"/>
    </location>
</feature>
<feature type="modified residue" description="Phosphoserine" evidence="6">
    <location>
        <position position="2881"/>
    </location>
</feature>
<feature type="modified residue" description="Phosphoserine" evidence="6">
    <location>
        <position position="3104"/>
    </location>
</feature>
<feature type="modified residue" description="Phosphoserine" evidence="6">
    <location>
        <position position="3110"/>
    </location>
</feature>
<dbReference type="EMBL" id="AY321364">
    <property type="protein sequence ID" value="AAP84718.1"/>
    <property type="molecule type" value="mRNA"/>
</dbReference>
<dbReference type="EMBL" id="AE014296">
    <property type="protein sequence ID" value="AAF47343.2"/>
    <property type="molecule type" value="Genomic_DNA"/>
</dbReference>
<dbReference type="EMBL" id="AE014296">
    <property type="protein sequence ID" value="AAS64921.1"/>
    <property type="molecule type" value="Genomic_DNA"/>
</dbReference>
<dbReference type="EMBL" id="AE014296">
    <property type="protein sequence ID" value="AFH04199.1"/>
    <property type="molecule type" value="Genomic_DNA"/>
</dbReference>
<dbReference type="RefSeq" id="NP_001246528.1">
    <property type="nucleotide sequence ID" value="NM_001259599.2"/>
</dbReference>
<dbReference type="RefSeq" id="NP_612007.2">
    <property type="nucleotide sequence ID" value="NM_138163.2"/>
</dbReference>
<dbReference type="RefSeq" id="NP_995944.1">
    <property type="nucleotide sequence ID" value="NM_206222.3"/>
</dbReference>
<dbReference type="SMR" id="Q7YZH1"/>
<dbReference type="BioGRID" id="63591">
    <property type="interactions" value="5"/>
</dbReference>
<dbReference type="FunCoup" id="Q7YZH1">
    <property type="interactions" value="662"/>
</dbReference>
<dbReference type="IntAct" id="Q7YZH1">
    <property type="interactions" value="5"/>
</dbReference>
<dbReference type="STRING" id="7227.FBpp0072431"/>
<dbReference type="GlyGen" id="Q7YZH1">
    <property type="glycosylation" value="8 sites"/>
</dbReference>
<dbReference type="iPTMnet" id="Q7YZH1"/>
<dbReference type="PaxDb" id="7227-FBpp0072431"/>
<dbReference type="EnsemblMetazoa" id="FBtr0072532">
    <property type="protein sequence ID" value="FBpp0072431"/>
    <property type="gene ID" value="FBgn0035106"/>
</dbReference>
<dbReference type="EnsemblMetazoa" id="FBtr0305548">
    <property type="protein sequence ID" value="FBpp0293999"/>
    <property type="gene ID" value="FBgn0035106"/>
</dbReference>
<dbReference type="EnsemblMetazoa" id="FBtr0305549">
    <property type="protein sequence ID" value="FBpp0294000"/>
    <property type="gene ID" value="FBgn0035106"/>
</dbReference>
<dbReference type="GeneID" id="38027"/>
<dbReference type="KEGG" id="dme:Dmel_CG7036"/>
<dbReference type="UCSC" id="CG7036-RA">
    <property type="organism name" value="d. melanogaster"/>
</dbReference>
<dbReference type="AGR" id="FB:FBgn0035106"/>
<dbReference type="CTD" id="38027"/>
<dbReference type="FlyBase" id="FBgn0035106">
    <property type="gene designation" value="rno"/>
</dbReference>
<dbReference type="VEuPathDB" id="VectorBase:FBgn0035106"/>
<dbReference type="eggNOG" id="KOG0954">
    <property type="taxonomic scope" value="Eukaryota"/>
</dbReference>
<dbReference type="GeneTree" id="ENSGT00940000158722"/>
<dbReference type="HOGENOM" id="CLU_225483_0_0_1"/>
<dbReference type="InParanoid" id="Q7YZH1"/>
<dbReference type="OMA" id="RIPWNEN"/>
<dbReference type="OrthoDB" id="20839at2759"/>
<dbReference type="PhylomeDB" id="Q7YZH1"/>
<dbReference type="SignaLink" id="Q7YZH1"/>
<dbReference type="BioGRID-ORCS" id="38027">
    <property type="hits" value="0 hits in 3 CRISPR screens"/>
</dbReference>
<dbReference type="ChiTaRS" id="rno">
    <property type="organism name" value="fly"/>
</dbReference>
<dbReference type="GenomeRNAi" id="38027"/>
<dbReference type="PRO" id="PR:Q7YZH1"/>
<dbReference type="Proteomes" id="UP000000803">
    <property type="component" value="Chromosome 3L"/>
</dbReference>
<dbReference type="Bgee" id="FBgn0035106">
    <property type="expression patterns" value="Expressed in spermatogonium in testis and 254 other cell types or tissues"/>
</dbReference>
<dbReference type="ExpressionAtlas" id="Q7YZH1">
    <property type="expression patterns" value="baseline and differential"/>
</dbReference>
<dbReference type="GO" id="GO:0005634">
    <property type="term" value="C:nucleus"/>
    <property type="evidence" value="ECO:0000314"/>
    <property type="project" value="UniProtKB"/>
</dbReference>
<dbReference type="GO" id="GO:0008270">
    <property type="term" value="F:zinc ion binding"/>
    <property type="evidence" value="ECO:0007669"/>
    <property type="project" value="UniProtKB-KW"/>
</dbReference>
<dbReference type="GO" id="GO:0042051">
    <property type="term" value="P:compound eye photoreceptor development"/>
    <property type="evidence" value="ECO:0000315"/>
    <property type="project" value="UniProtKB"/>
</dbReference>
<dbReference type="GO" id="GO:0006357">
    <property type="term" value="P:regulation of transcription by RNA polymerase II"/>
    <property type="evidence" value="ECO:0000318"/>
    <property type="project" value="GO_Central"/>
</dbReference>
<dbReference type="CDD" id="cd15707">
    <property type="entry name" value="ePHD_RNO"/>
    <property type="match status" value="1"/>
</dbReference>
<dbReference type="CDD" id="cd15573">
    <property type="entry name" value="PHD_JADE"/>
    <property type="match status" value="1"/>
</dbReference>
<dbReference type="FunFam" id="3.30.40.10:FF:000004">
    <property type="entry name" value="Jade family PHD finger 2"/>
    <property type="match status" value="1"/>
</dbReference>
<dbReference type="FunFam" id="3.30.40.10:FF:000030">
    <property type="entry name" value="Protein Jade-1 isoform 1"/>
    <property type="match status" value="1"/>
</dbReference>
<dbReference type="Gene3D" id="3.30.40.10">
    <property type="entry name" value="Zinc/RING finger domain, C3HC4 (zinc finger)"/>
    <property type="match status" value="2"/>
</dbReference>
<dbReference type="InterPro" id="IPR019542">
    <property type="entry name" value="Enhancer_polycomb-like_N"/>
</dbReference>
<dbReference type="InterPro" id="IPR034732">
    <property type="entry name" value="EPHD"/>
</dbReference>
<dbReference type="InterPro" id="IPR050701">
    <property type="entry name" value="Histone_Mod_Regulator"/>
</dbReference>
<dbReference type="InterPro" id="IPR019786">
    <property type="entry name" value="Zinc_finger_PHD-type_CS"/>
</dbReference>
<dbReference type="InterPro" id="IPR011011">
    <property type="entry name" value="Znf_FYVE_PHD"/>
</dbReference>
<dbReference type="InterPro" id="IPR001965">
    <property type="entry name" value="Znf_PHD"/>
</dbReference>
<dbReference type="InterPro" id="IPR019787">
    <property type="entry name" value="Znf_PHD-finger"/>
</dbReference>
<dbReference type="InterPro" id="IPR013083">
    <property type="entry name" value="Znf_RING/FYVE/PHD"/>
</dbReference>
<dbReference type="PANTHER" id="PTHR13793:SF160">
    <property type="entry name" value="PHD FINGER PROTEIN RHINOCEROS"/>
    <property type="match status" value="1"/>
</dbReference>
<dbReference type="PANTHER" id="PTHR13793">
    <property type="entry name" value="PHD FINGER PROTEINS"/>
    <property type="match status" value="1"/>
</dbReference>
<dbReference type="Pfam" id="PF10513">
    <property type="entry name" value="EPL1"/>
    <property type="match status" value="1"/>
</dbReference>
<dbReference type="Pfam" id="PF13831">
    <property type="entry name" value="PHD_2"/>
    <property type="match status" value="1"/>
</dbReference>
<dbReference type="Pfam" id="PF13832">
    <property type="entry name" value="zf-HC5HC2H_2"/>
    <property type="match status" value="1"/>
</dbReference>
<dbReference type="SMART" id="SM00249">
    <property type="entry name" value="PHD"/>
    <property type="match status" value="2"/>
</dbReference>
<dbReference type="SUPFAM" id="SSF57903">
    <property type="entry name" value="FYVE/PHD zinc finger"/>
    <property type="match status" value="1"/>
</dbReference>
<dbReference type="PROSITE" id="PS51805">
    <property type="entry name" value="EPHD"/>
    <property type="match status" value="1"/>
</dbReference>
<dbReference type="PROSITE" id="PS01359">
    <property type="entry name" value="ZF_PHD_1"/>
    <property type="match status" value="1"/>
</dbReference>
<dbReference type="PROSITE" id="PS50016">
    <property type="entry name" value="ZF_PHD_2"/>
    <property type="match status" value="1"/>
</dbReference>
<keyword id="KW-0175">Coiled coil</keyword>
<keyword id="KW-0217">Developmental protein</keyword>
<keyword id="KW-0479">Metal-binding</keyword>
<keyword id="KW-0539">Nucleus</keyword>
<keyword id="KW-0597">Phosphoprotein</keyword>
<keyword id="KW-1185">Reference proteome</keyword>
<keyword id="KW-0677">Repeat</keyword>
<keyword id="KW-0862">Zinc</keyword>
<keyword id="KW-0863">Zinc-finger</keyword>
<evidence type="ECO:0000255" key="1"/>
<evidence type="ECO:0000255" key="2">
    <source>
        <dbReference type="PROSITE-ProRule" id="PRU00146"/>
    </source>
</evidence>
<evidence type="ECO:0000255" key="3">
    <source>
        <dbReference type="PROSITE-ProRule" id="PRU01146"/>
    </source>
</evidence>
<evidence type="ECO:0000256" key="4">
    <source>
        <dbReference type="SAM" id="MobiDB-lite"/>
    </source>
</evidence>
<evidence type="ECO:0000269" key="5">
    <source>
    </source>
</evidence>
<evidence type="ECO:0000269" key="6">
    <source>
    </source>
</evidence>
<evidence type="ECO:0000305" key="7"/>
<accession>Q7YZH1</accession>
<accession>M9NDD8</accession>
<accession>Q9W0U2</accession>
<comment type="function">
    <text evidence="5">May function as a negative regulator of the EGFR/Ras/MAPK signaling pathway during eye development.</text>
</comment>
<comment type="subcellular location">
    <subcellularLocation>
        <location evidence="5">Nucleus</location>
    </subcellularLocation>
</comment>
<comment type="similarity">
    <text evidence="7">Belongs to the JADE family.</text>
</comment>